<comment type="function">
    <text evidence="1">Catalyzes the reductive methylation of 2'-deoxyuridine-5'-monophosphate (dUMP) to 2'-deoxythymidine-5'-monophosphate (dTMP) while utilizing 5,10-methylenetetrahydrofolate (mTHF) as the methyl donor and reductant in the reaction, yielding dihydrofolate (DHF) as a by-product. This enzymatic reaction provides an intracellular de novo source of dTMP, an essential precursor for DNA biosynthesis.</text>
</comment>
<comment type="catalytic activity">
    <reaction evidence="1">
        <text>dUMP + (6R)-5,10-methylene-5,6,7,8-tetrahydrofolate = 7,8-dihydrofolate + dTMP</text>
        <dbReference type="Rhea" id="RHEA:12104"/>
        <dbReference type="ChEBI" id="CHEBI:15636"/>
        <dbReference type="ChEBI" id="CHEBI:57451"/>
        <dbReference type="ChEBI" id="CHEBI:63528"/>
        <dbReference type="ChEBI" id="CHEBI:246422"/>
        <dbReference type="EC" id="2.1.1.45"/>
    </reaction>
</comment>
<comment type="pathway">
    <text evidence="1">Pyrimidine metabolism; dTTP biosynthesis.</text>
</comment>
<comment type="subunit">
    <text evidence="1">Homodimer.</text>
</comment>
<comment type="subcellular location">
    <subcellularLocation>
        <location evidence="1">Cytoplasm</location>
    </subcellularLocation>
</comment>
<comment type="similarity">
    <text evidence="1">Belongs to the thymidylate synthase family. Bacterial-type ThyA subfamily.</text>
</comment>
<protein>
    <recommendedName>
        <fullName evidence="1">Thymidylate synthase</fullName>
        <shortName evidence="1">TS</shortName>
        <shortName evidence="1">TSase</shortName>
        <ecNumber evidence="1">2.1.1.45</ecNumber>
    </recommendedName>
</protein>
<organism>
    <name type="scientific">Pseudomonas syringae pv. tomato (strain ATCC BAA-871 / DC3000)</name>
    <dbReference type="NCBI Taxonomy" id="223283"/>
    <lineage>
        <taxon>Bacteria</taxon>
        <taxon>Pseudomonadati</taxon>
        <taxon>Pseudomonadota</taxon>
        <taxon>Gammaproteobacteria</taxon>
        <taxon>Pseudomonadales</taxon>
        <taxon>Pseudomonadaceae</taxon>
        <taxon>Pseudomonas</taxon>
    </lineage>
</organism>
<reference key="1">
    <citation type="journal article" date="2003" name="Proc. Natl. Acad. Sci. U.S.A.">
        <title>The complete genome sequence of the Arabidopsis and tomato pathogen Pseudomonas syringae pv. tomato DC3000.</title>
        <authorList>
            <person name="Buell C.R."/>
            <person name="Joardar V."/>
            <person name="Lindeberg M."/>
            <person name="Selengut J."/>
            <person name="Paulsen I.T."/>
            <person name="Gwinn M.L."/>
            <person name="Dodson R.J."/>
            <person name="DeBoy R.T."/>
            <person name="Durkin A.S."/>
            <person name="Kolonay J.F."/>
            <person name="Madupu R."/>
            <person name="Daugherty S.C."/>
            <person name="Brinkac L.M."/>
            <person name="Beanan M.J."/>
            <person name="Haft D.H."/>
            <person name="Nelson W.C."/>
            <person name="Davidsen T.M."/>
            <person name="Zafar N."/>
            <person name="Zhou L."/>
            <person name="Liu J."/>
            <person name="Yuan Q."/>
            <person name="Khouri H.M."/>
            <person name="Fedorova N.B."/>
            <person name="Tran B."/>
            <person name="Russell D."/>
            <person name="Berry K.J."/>
            <person name="Utterback T.R."/>
            <person name="Van Aken S.E."/>
            <person name="Feldblyum T.V."/>
            <person name="D'Ascenzo M."/>
            <person name="Deng W.-L."/>
            <person name="Ramos A.R."/>
            <person name="Alfano J.R."/>
            <person name="Cartinhour S."/>
            <person name="Chatterjee A.K."/>
            <person name="Delaney T.P."/>
            <person name="Lazarowitz S.G."/>
            <person name="Martin G.B."/>
            <person name="Schneider D.J."/>
            <person name="Tang X."/>
            <person name="Bender C.L."/>
            <person name="White O."/>
            <person name="Fraser C.M."/>
            <person name="Collmer A."/>
        </authorList>
    </citation>
    <scope>NUCLEOTIDE SEQUENCE [LARGE SCALE GENOMIC DNA]</scope>
    <source>
        <strain>ATCC BAA-871 / DC3000</strain>
    </source>
</reference>
<feature type="chain" id="PRO_0000141006" description="Thymidylate synthase">
    <location>
        <begin position="1"/>
        <end position="323"/>
    </location>
</feature>
<feature type="active site" description="Nucleophile" evidence="1">
    <location>
        <position position="192"/>
    </location>
</feature>
<feature type="binding site" description="in other chain" evidence="1">
    <location>
        <position position="21"/>
    </location>
    <ligand>
        <name>dUMP</name>
        <dbReference type="ChEBI" id="CHEBI:246422"/>
        <note>ligand shared between dimeric partners</note>
    </ligand>
</feature>
<feature type="binding site" evidence="1">
    <location>
        <begin position="172"/>
        <end position="173"/>
    </location>
    <ligand>
        <name>dUMP</name>
        <dbReference type="ChEBI" id="CHEBI:246422"/>
        <note>ligand shared between dimeric partners</note>
    </ligand>
</feature>
<feature type="binding site" description="in other chain" evidence="1">
    <location>
        <begin position="214"/>
        <end position="217"/>
    </location>
    <ligand>
        <name>dUMP</name>
        <dbReference type="ChEBI" id="CHEBI:246422"/>
        <note>ligand shared between dimeric partners</note>
    </ligand>
</feature>
<feature type="binding site" evidence="1">
    <location>
        <position position="217"/>
    </location>
    <ligand>
        <name>(6R)-5,10-methylene-5,6,7,8-tetrahydrofolate</name>
        <dbReference type="ChEBI" id="CHEBI:15636"/>
    </ligand>
</feature>
<feature type="binding site" description="in other chain" evidence="1">
    <location>
        <position position="225"/>
    </location>
    <ligand>
        <name>dUMP</name>
        <dbReference type="ChEBI" id="CHEBI:246422"/>
        <note>ligand shared between dimeric partners</note>
    </ligand>
</feature>
<feature type="binding site" description="in other chain" evidence="1">
    <location>
        <begin position="255"/>
        <end position="257"/>
    </location>
    <ligand>
        <name>dUMP</name>
        <dbReference type="ChEBI" id="CHEBI:246422"/>
        <note>ligand shared between dimeric partners</note>
    </ligand>
</feature>
<feature type="binding site" evidence="1">
    <location>
        <position position="322"/>
    </location>
    <ligand>
        <name>(6R)-5,10-methylene-5,6,7,8-tetrahydrofolate</name>
        <dbReference type="ChEBI" id="CHEBI:15636"/>
    </ligand>
</feature>
<keyword id="KW-0963">Cytoplasm</keyword>
<keyword id="KW-0489">Methyltransferase</keyword>
<keyword id="KW-0545">Nucleotide biosynthesis</keyword>
<keyword id="KW-1185">Reference proteome</keyword>
<keyword id="KW-0808">Transferase</keyword>
<name>TYSY_PSESM</name>
<evidence type="ECO:0000255" key="1">
    <source>
        <dbReference type="HAMAP-Rule" id="MF_00008"/>
    </source>
</evidence>
<dbReference type="EC" id="2.1.1.45" evidence="1"/>
<dbReference type="EMBL" id="AE016853">
    <property type="protein sequence ID" value="AAO58708.1"/>
    <property type="molecule type" value="Genomic_DNA"/>
</dbReference>
<dbReference type="RefSeq" id="NP_795013.1">
    <property type="nucleotide sequence ID" value="NC_004578.1"/>
</dbReference>
<dbReference type="RefSeq" id="WP_011105406.1">
    <property type="nucleotide sequence ID" value="NC_004578.1"/>
</dbReference>
<dbReference type="SMR" id="Q87UL4"/>
<dbReference type="STRING" id="223283.PSPTO_5282"/>
<dbReference type="GeneID" id="1186967"/>
<dbReference type="KEGG" id="pst:PSPTO_5282"/>
<dbReference type="PATRIC" id="fig|223283.9.peg.5407"/>
<dbReference type="eggNOG" id="COG0207">
    <property type="taxonomic scope" value="Bacteria"/>
</dbReference>
<dbReference type="HOGENOM" id="CLU_021669_0_1_6"/>
<dbReference type="OrthoDB" id="9774633at2"/>
<dbReference type="PhylomeDB" id="Q87UL4"/>
<dbReference type="UniPathway" id="UPA00575"/>
<dbReference type="Proteomes" id="UP000002515">
    <property type="component" value="Chromosome"/>
</dbReference>
<dbReference type="GO" id="GO:0005829">
    <property type="term" value="C:cytosol"/>
    <property type="evidence" value="ECO:0007669"/>
    <property type="project" value="TreeGrafter"/>
</dbReference>
<dbReference type="GO" id="GO:0004799">
    <property type="term" value="F:thymidylate synthase activity"/>
    <property type="evidence" value="ECO:0007669"/>
    <property type="project" value="UniProtKB-UniRule"/>
</dbReference>
<dbReference type="GO" id="GO:0006231">
    <property type="term" value="P:dTMP biosynthetic process"/>
    <property type="evidence" value="ECO:0007669"/>
    <property type="project" value="UniProtKB-UniRule"/>
</dbReference>
<dbReference type="GO" id="GO:0006235">
    <property type="term" value="P:dTTP biosynthetic process"/>
    <property type="evidence" value="ECO:0007669"/>
    <property type="project" value="UniProtKB-UniRule"/>
</dbReference>
<dbReference type="GO" id="GO:0032259">
    <property type="term" value="P:methylation"/>
    <property type="evidence" value="ECO:0007669"/>
    <property type="project" value="UniProtKB-KW"/>
</dbReference>
<dbReference type="CDD" id="cd00351">
    <property type="entry name" value="TS_Pyrimidine_HMase"/>
    <property type="match status" value="1"/>
</dbReference>
<dbReference type="Gene3D" id="3.30.572.10">
    <property type="entry name" value="Thymidylate synthase/dCMP hydroxymethylase domain"/>
    <property type="match status" value="1"/>
</dbReference>
<dbReference type="HAMAP" id="MF_00008">
    <property type="entry name" value="Thymidy_synth_bact"/>
    <property type="match status" value="1"/>
</dbReference>
<dbReference type="InterPro" id="IPR045097">
    <property type="entry name" value="Thymidate_synth/dCMP_Mease"/>
</dbReference>
<dbReference type="InterPro" id="IPR023451">
    <property type="entry name" value="Thymidate_synth/dCMP_Mease_dom"/>
</dbReference>
<dbReference type="InterPro" id="IPR036926">
    <property type="entry name" value="Thymidate_synth/dCMP_Mease_sf"/>
</dbReference>
<dbReference type="InterPro" id="IPR000398">
    <property type="entry name" value="Thymidylate_synthase"/>
</dbReference>
<dbReference type="NCBIfam" id="NF010393">
    <property type="entry name" value="PRK13821.1"/>
    <property type="match status" value="1"/>
</dbReference>
<dbReference type="NCBIfam" id="TIGR03284">
    <property type="entry name" value="thym_sym"/>
    <property type="match status" value="1"/>
</dbReference>
<dbReference type="PANTHER" id="PTHR11548:SF9">
    <property type="entry name" value="THYMIDYLATE SYNTHASE"/>
    <property type="match status" value="1"/>
</dbReference>
<dbReference type="PANTHER" id="PTHR11548">
    <property type="entry name" value="THYMIDYLATE SYNTHASE 1"/>
    <property type="match status" value="1"/>
</dbReference>
<dbReference type="Pfam" id="PF00303">
    <property type="entry name" value="Thymidylat_synt"/>
    <property type="match status" value="1"/>
</dbReference>
<dbReference type="PRINTS" id="PR00108">
    <property type="entry name" value="THYMDSNTHASE"/>
</dbReference>
<dbReference type="SUPFAM" id="SSF55831">
    <property type="entry name" value="Thymidylate synthase/dCMP hydroxymethylase"/>
    <property type="match status" value="1"/>
</dbReference>
<gene>
    <name evidence="1" type="primary">thyA</name>
    <name type="ordered locus">PSPTO_5282</name>
</gene>
<accession>Q87UL4</accession>
<proteinExistence type="inferred from homology"/>
<sequence length="323" mass="36724">MKQYLELVAHVIKHGTLQANRTGVNTISFPGAMLRYDLQEGFPAITTRRMAFKSAIGEMVGFLRGVSNAAEFRELGCKVWDQNANENAQWLNNPFRKGEDDLGEIYGVQWRKWPAYKRIDTGNVAAIELALGQGYRQIAESEEDGQSFVVLYKAIDQIRQCIDTIINDPGSRRILFHGWNCAQLDEMALPPCHLLYQLHPNPQTREISLTLYIRSNDLGLGTPFNLTEGAALLSLIGRLTGYTPRWFTYFIGDAHVYENHLDMLNEQMTREPYPMPKLVISDRVPEFAKTGVYQPEWLELIEPSDFSLEGYQHHPAMTAPMAV</sequence>